<keyword id="KW-0067">ATP-binding</keyword>
<keyword id="KW-0963">Cytoplasm</keyword>
<keyword id="KW-1015">Disulfide bond</keyword>
<keyword id="KW-0547">Nucleotide-binding</keyword>
<keyword id="KW-0694">RNA-binding</keyword>
<keyword id="KW-0808">Transferase</keyword>
<keyword id="KW-0819">tRNA processing</keyword>
<keyword id="KW-0820">tRNA-binding</keyword>
<sequence>MRVLAAMSGGVDSAVAAARAVEAGHDVVGVHLALSRMPGTLRTGSRGCCTIEDSRDAWRACDVLGIPYYVWDFSERFKEDVVQDFIDEYAAGRTPNPCMRCNERIKFAALLEKAIALGFDAVCTGHYAKVIEDADGNRELHRAADWAKDQSYVLGVLTHEQLKHSMFPLADTPSKAEVRAEAERRGLSVANKPDSHDICFISDGDTRGWLAEKIDMTTGDIVDETGAKVGEHPGANAFTVGQRRGLKLGTPAADGKPRFVLEIRPKENKVVVGPEALLAIDEIRGIKVSWAGLPISEVATGAEFDCHAQVRAHGDPVPAIARVEAVTDESGVERAQLVVTLTDPLRGVAPGQTVVLYQGSRVLGQATIDAARSLQRQVL</sequence>
<organism>
    <name type="scientific">Paenarthrobacter aurescens (strain TC1)</name>
    <dbReference type="NCBI Taxonomy" id="290340"/>
    <lineage>
        <taxon>Bacteria</taxon>
        <taxon>Bacillati</taxon>
        <taxon>Actinomycetota</taxon>
        <taxon>Actinomycetes</taxon>
        <taxon>Micrococcales</taxon>
        <taxon>Micrococcaceae</taxon>
        <taxon>Paenarthrobacter</taxon>
    </lineage>
</organism>
<reference key="1">
    <citation type="journal article" date="2006" name="PLoS Genet.">
        <title>Secrets of soil survival revealed by the genome sequence of Arthrobacter aurescens TC1.</title>
        <authorList>
            <person name="Mongodin E.F."/>
            <person name="Shapir N."/>
            <person name="Daugherty S.C."/>
            <person name="DeBoy R.T."/>
            <person name="Emerson J.B."/>
            <person name="Shvartzbeyn A."/>
            <person name="Radune D."/>
            <person name="Vamathevan J."/>
            <person name="Riggs F."/>
            <person name="Grinberg V."/>
            <person name="Khouri H.M."/>
            <person name="Wackett L.P."/>
            <person name="Nelson K.E."/>
            <person name="Sadowsky M.J."/>
        </authorList>
    </citation>
    <scope>NUCLEOTIDE SEQUENCE [LARGE SCALE GENOMIC DNA]</scope>
    <source>
        <strain>TC1</strain>
    </source>
</reference>
<feature type="chain" id="PRO_0000349516" description="tRNA-specific 2-thiouridylase MnmA">
    <location>
        <begin position="1"/>
        <end position="379"/>
    </location>
</feature>
<feature type="region of interest" description="Interaction with tRNA" evidence="1">
    <location>
        <begin position="148"/>
        <end position="150"/>
    </location>
</feature>
<feature type="active site" description="Nucleophile" evidence="1">
    <location>
        <position position="101"/>
    </location>
</feature>
<feature type="active site" description="Cysteine persulfide intermediate" evidence="1">
    <location>
        <position position="199"/>
    </location>
</feature>
<feature type="binding site" evidence="1">
    <location>
        <begin position="6"/>
        <end position="13"/>
    </location>
    <ligand>
        <name>ATP</name>
        <dbReference type="ChEBI" id="CHEBI:30616"/>
    </ligand>
</feature>
<feature type="binding site" evidence="1">
    <location>
        <position position="32"/>
    </location>
    <ligand>
        <name>ATP</name>
        <dbReference type="ChEBI" id="CHEBI:30616"/>
    </ligand>
</feature>
<feature type="binding site" evidence="1">
    <location>
        <position position="125"/>
    </location>
    <ligand>
        <name>ATP</name>
        <dbReference type="ChEBI" id="CHEBI:30616"/>
    </ligand>
</feature>
<feature type="site" description="Interaction with tRNA" evidence="1">
    <location>
        <position position="126"/>
    </location>
</feature>
<feature type="site" description="Interaction with tRNA" evidence="1">
    <location>
        <position position="352"/>
    </location>
</feature>
<feature type="disulfide bond" description="Alternate" evidence="1">
    <location>
        <begin position="101"/>
        <end position="199"/>
    </location>
</feature>
<evidence type="ECO:0000255" key="1">
    <source>
        <dbReference type="HAMAP-Rule" id="MF_00144"/>
    </source>
</evidence>
<evidence type="ECO:0000305" key="2"/>
<dbReference type="EC" id="2.8.1.13" evidence="1"/>
<dbReference type="EMBL" id="CP000474">
    <property type="protein sequence ID" value="ABM07957.1"/>
    <property type="status" value="ALT_INIT"/>
    <property type="molecule type" value="Genomic_DNA"/>
</dbReference>
<dbReference type="SMR" id="A1R863"/>
<dbReference type="STRING" id="290340.AAur_2710"/>
<dbReference type="KEGG" id="aau:AAur_2710"/>
<dbReference type="eggNOG" id="COG0482">
    <property type="taxonomic scope" value="Bacteria"/>
</dbReference>
<dbReference type="HOGENOM" id="CLU_035188_0_2_11"/>
<dbReference type="Proteomes" id="UP000000637">
    <property type="component" value="Chromosome"/>
</dbReference>
<dbReference type="GO" id="GO:0005737">
    <property type="term" value="C:cytoplasm"/>
    <property type="evidence" value="ECO:0007669"/>
    <property type="project" value="UniProtKB-SubCell"/>
</dbReference>
<dbReference type="GO" id="GO:0005524">
    <property type="term" value="F:ATP binding"/>
    <property type="evidence" value="ECO:0007669"/>
    <property type="project" value="UniProtKB-KW"/>
</dbReference>
<dbReference type="GO" id="GO:0000049">
    <property type="term" value="F:tRNA binding"/>
    <property type="evidence" value="ECO:0007669"/>
    <property type="project" value="UniProtKB-KW"/>
</dbReference>
<dbReference type="GO" id="GO:0103016">
    <property type="term" value="F:tRNA-uridine 2-sulfurtransferase activity"/>
    <property type="evidence" value="ECO:0007669"/>
    <property type="project" value="UniProtKB-EC"/>
</dbReference>
<dbReference type="GO" id="GO:0002143">
    <property type="term" value="P:tRNA wobble position uridine thiolation"/>
    <property type="evidence" value="ECO:0007669"/>
    <property type="project" value="TreeGrafter"/>
</dbReference>
<dbReference type="CDD" id="cd01998">
    <property type="entry name" value="MnmA_TRMU-like"/>
    <property type="match status" value="1"/>
</dbReference>
<dbReference type="FunFam" id="3.40.50.620:FF:000057">
    <property type="entry name" value="tRNA-specific 2-thiouridylase MnmA"/>
    <property type="match status" value="1"/>
</dbReference>
<dbReference type="Gene3D" id="2.30.30.280">
    <property type="entry name" value="Adenine nucleotide alpha hydrolases-like domains"/>
    <property type="match status" value="1"/>
</dbReference>
<dbReference type="Gene3D" id="3.40.50.620">
    <property type="entry name" value="HUPs"/>
    <property type="match status" value="1"/>
</dbReference>
<dbReference type="Gene3D" id="2.40.30.10">
    <property type="entry name" value="Translation factors"/>
    <property type="match status" value="1"/>
</dbReference>
<dbReference type="HAMAP" id="MF_00144">
    <property type="entry name" value="tRNA_thiouridyl_MnmA"/>
    <property type="match status" value="1"/>
</dbReference>
<dbReference type="InterPro" id="IPR004506">
    <property type="entry name" value="MnmA-like"/>
</dbReference>
<dbReference type="InterPro" id="IPR046885">
    <property type="entry name" value="MnmA-like_C"/>
</dbReference>
<dbReference type="InterPro" id="IPR046884">
    <property type="entry name" value="MnmA-like_central"/>
</dbReference>
<dbReference type="InterPro" id="IPR023382">
    <property type="entry name" value="MnmA-like_central_sf"/>
</dbReference>
<dbReference type="InterPro" id="IPR014729">
    <property type="entry name" value="Rossmann-like_a/b/a_fold"/>
</dbReference>
<dbReference type="NCBIfam" id="NF001138">
    <property type="entry name" value="PRK00143.1"/>
    <property type="match status" value="1"/>
</dbReference>
<dbReference type="NCBIfam" id="TIGR00420">
    <property type="entry name" value="trmU"/>
    <property type="match status" value="1"/>
</dbReference>
<dbReference type="PANTHER" id="PTHR11933:SF5">
    <property type="entry name" value="MITOCHONDRIAL TRNA-SPECIFIC 2-THIOURIDYLASE 1"/>
    <property type="match status" value="1"/>
</dbReference>
<dbReference type="PANTHER" id="PTHR11933">
    <property type="entry name" value="TRNA 5-METHYLAMINOMETHYL-2-THIOURIDYLATE -METHYLTRANSFERASE"/>
    <property type="match status" value="1"/>
</dbReference>
<dbReference type="Pfam" id="PF03054">
    <property type="entry name" value="tRNA_Me_trans"/>
    <property type="match status" value="1"/>
</dbReference>
<dbReference type="Pfam" id="PF20258">
    <property type="entry name" value="tRNA_Me_trans_C"/>
    <property type="match status" value="1"/>
</dbReference>
<dbReference type="Pfam" id="PF20259">
    <property type="entry name" value="tRNA_Me_trans_M"/>
    <property type="match status" value="1"/>
</dbReference>
<dbReference type="SUPFAM" id="SSF52402">
    <property type="entry name" value="Adenine nucleotide alpha hydrolases-like"/>
    <property type="match status" value="1"/>
</dbReference>
<name>MNMA_PAEAT</name>
<accession>A1R863</accession>
<protein>
    <recommendedName>
        <fullName evidence="1">tRNA-specific 2-thiouridylase MnmA</fullName>
        <ecNumber evidence="1">2.8.1.13</ecNumber>
    </recommendedName>
</protein>
<gene>
    <name evidence="1" type="primary">mnmA</name>
    <name type="ordered locus">AAur_2710</name>
</gene>
<proteinExistence type="inferred from homology"/>
<comment type="function">
    <text evidence="1">Catalyzes the 2-thiolation of uridine at the wobble position (U34) of tRNA, leading to the formation of s(2)U34.</text>
</comment>
<comment type="catalytic activity">
    <reaction evidence="1">
        <text>S-sulfanyl-L-cysteinyl-[protein] + uridine(34) in tRNA + AH2 + ATP = 2-thiouridine(34) in tRNA + L-cysteinyl-[protein] + A + AMP + diphosphate + H(+)</text>
        <dbReference type="Rhea" id="RHEA:47032"/>
        <dbReference type="Rhea" id="RHEA-COMP:10131"/>
        <dbReference type="Rhea" id="RHEA-COMP:11726"/>
        <dbReference type="Rhea" id="RHEA-COMP:11727"/>
        <dbReference type="Rhea" id="RHEA-COMP:11728"/>
        <dbReference type="ChEBI" id="CHEBI:13193"/>
        <dbReference type="ChEBI" id="CHEBI:15378"/>
        <dbReference type="ChEBI" id="CHEBI:17499"/>
        <dbReference type="ChEBI" id="CHEBI:29950"/>
        <dbReference type="ChEBI" id="CHEBI:30616"/>
        <dbReference type="ChEBI" id="CHEBI:33019"/>
        <dbReference type="ChEBI" id="CHEBI:61963"/>
        <dbReference type="ChEBI" id="CHEBI:65315"/>
        <dbReference type="ChEBI" id="CHEBI:87170"/>
        <dbReference type="ChEBI" id="CHEBI:456215"/>
        <dbReference type="EC" id="2.8.1.13"/>
    </reaction>
</comment>
<comment type="subcellular location">
    <subcellularLocation>
        <location evidence="1">Cytoplasm</location>
    </subcellularLocation>
</comment>
<comment type="similarity">
    <text evidence="1">Belongs to the MnmA/TRMU family.</text>
</comment>
<comment type="sequence caution" evidence="2">
    <conflict type="erroneous initiation">
        <sequence resource="EMBL-CDS" id="ABM07957"/>
    </conflict>
</comment>